<feature type="chain" id="PRO_1000070169" description="Membrane protein insertase YidC">
    <location>
        <begin position="1"/>
        <end position="542"/>
    </location>
</feature>
<feature type="transmembrane region" description="Helical" evidence="1">
    <location>
        <begin position="6"/>
        <end position="26"/>
    </location>
</feature>
<feature type="transmembrane region" description="Helical" evidence="1">
    <location>
        <begin position="326"/>
        <end position="346"/>
    </location>
</feature>
<feature type="transmembrane region" description="Helical" evidence="1">
    <location>
        <begin position="350"/>
        <end position="370"/>
    </location>
</feature>
<feature type="transmembrane region" description="Helical" evidence="1">
    <location>
        <begin position="421"/>
        <end position="441"/>
    </location>
</feature>
<feature type="transmembrane region" description="Helical" evidence="1">
    <location>
        <begin position="458"/>
        <end position="478"/>
    </location>
</feature>
<feature type="transmembrane region" description="Helical" evidence="1">
    <location>
        <begin position="501"/>
        <end position="521"/>
    </location>
</feature>
<comment type="function">
    <text evidence="1">Required for the insertion and/or proper folding and/or complex formation of integral membrane proteins into the membrane. Involved in integration of membrane proteins that insert both dependently and independently of the Sec translocase complex, as well as at least some lipoproteins. Aids folding of multispanning membrane proteins.</text>
</comment>
<comment type="subunit">
    <text evidence="1">Interacts with the Sec translocase complex via SecD. Specifically interacts with transmembrane segments of nascent integral membrane proteins during membrane integration.</text>
</comment>
<comment type="subcellular location">
    <subcellularLocation>
        <location evidence="1">Cell inner membrane</location>
        <topology evidence="1">Multi-pass membrane protein</topology>
    </subcellularLocation>
</comment>
<comment type="similarity">
    <text evidence="1">Belongs to the OXA1/ALB3/YidC family. Type 1 subfamily.</text>
</comment>
<keyword id="KW-0997">Cell inner membrane</keyword>
<keyword id="KW-1003">Cell membrane</keyword>
<keyword id="KW-0143">Chaperone</keyword>
<keyword id="KW-0472">Membrane</keyword>
<keyword id="KW-0653">Protein transport</keyword>
<keyword id="KW-1185">Reference proteome</keyword>
<keyword id="KW-0812">Transmembrane</keyword>
<keyword id="KW-1133">Transmembrane helix</keyword>
<keyword id="KW-0813">Transport</keyword>
<accession>Q07VS6</accession>
<organism>
    <name type="scientific">Shewanella frigidimarina (strain NCIMB 400)</name>
    <dbReference type="NCBI Taxonomy" id="318167"/>
    <lineage>
        <taxon>Bacteria</taxon>
        <taxon>Pseudomonadati</taxon>
        <taxon>Pseudomonadota</taxon>
        <taxon>Gammaproteobacteria</taxon>
        <taxon>Alteromonadales</taxon>
        <taxon>Shewanellaceae</taxon>
        <taxon>Shewanella</taxon>
    </lineage>
</organism>
<reference key="1">
    <citation type="submission" date="2006-08" db="EMBL/GenBank/DDBJ databases">
        <title>Complete sequence of Shewanella frigidimarina NCIMB 400.</title>
        <authorList>
            <consortium name="US DOE Joint Genome Institute"/>
            <person name="Copeland A."/>
            <person name="Lucas S."/>
            <person name="Lapidus A."/>
            <person name="Barry K."/>
            <person name="Detter J.C."/>
            <person name="Glavina del Rio T."/>
            <person name="Hammon N."/>
            <person name="Israni S."/>
            <person name="Dalin E."/>
            <person name="Tice H."/>
            <person name="Pitluck S."/>
            <person name="Fredrickson J.K."/>
            <person name="Kolker E."/>
            <person name="McCuel L.A."/>
            <person name="DiChristina T."/>
            <person name="Nealson K.H."/>
            <person name="Newman D."/>
            <person name="Tiedje J.M."/>
            <person name="Zhou J."/>
            <person name="Romine M.F."/>
            <person name="Culley D.E."/>
            <person name="Serres M."/>
            <person name="Chertkov O."/>
            <person name="Brettin T."/>
            <person name="Bruce D."/>
            <person name="Han C."/>
            <person name="Tapia R."/>
            <person name="Gilna P."/>
            <person name="Schmutz J."/>
            <person name="Larimer F."/>
            <person name="Land M."/>
            <person name="Hauser L."/>
            <person name="Kyrpides N."/>
            <person name="Mikhailova N."/>
            <person name="Richardson P."/>
        </authorList>
    </citation>
    <scope>NUCLEOTIDE SEQUENCE [LARGE SCALE GENOMIC DNA]</scope>
    <source>
        <strain>NCIMB 400</strain>
    </source>
</reference>
<gene>
    <name evidence="1" type="primary">yidC</name>
    <name type="ordered locus">Sfri_4063</name>
</gene>
<name>YIDC_SHEFN</name>
<evidence type="ECO:0000255" key="1">
    <source>
        <dbReference type="HAMAP-Rule" id="MF_01810"/>
    </source>
</evidence>
<sequence>MESQRNILLIGLLFVSFLMWQQWQTDKAPKPATAQTVTQTNAASQHSADVPEADISGVPVELPANKNLISVKTDQLDIKISPIGGDIVYAALVEHKREIDSSDPFVILEQKNNFTYIAQSGLIGRDGIDSSANGRAAYSVQTNSYSLADGKDTLTVPFTYTADNGVTYVKSFTFTRGQYDVGVDYSISNTSAAPLQVQMYGQIKQTIKESESSMMMPTYRGGAFSAQDTRYEKYNFDDMADKNLAKVTLGGWAAMLQHYFVSAWVPPATDSNTIFSSMSAGGMANIGFRGAVYDIAPGATQEINSQFYVGPKNQKELSAISETLNLVVDYGFLWWLAIPIHWLLMFYQSFVGNWGVAIILITLTVRGGLYPLTKKQYTSMAKMRNLQPKLTEMKERFGDDRQKMGQAMMELYKKEKVNPMGGCLPILLQMPIFIALYWVLLESYELRHAPFMLWITDLSVQDPYYVLPLLMGLSMFLMQKMQPVAPTMDPMQVKMMQWMPVIFTVFFLWFPAGLVLYWLVGNLVAITQQKIIYAGLEKNGIK</sequence>
<dbReference type="EMBL" id="CP000447">
    <property type="protein sequence ID" value="ABI73888.1"/>
    <property type="molecule type" value="Genomic_DNA"/>
</dbReference>
<dbReference type="RefSeq" id="WP_011639468.1">
    <property type="nucleotide sequence ID" value="NC_008345.1"/>
</dbReference>
<dbReference type="SMR" id="Q07VS6"/>
<dbReference type="STRING" id="318167.Sfri_4063"/>
<dbReference type="KEGG" id="sfr:Sfri_4063"/>
<dbReference type="eggNOG" id="COG0706">
    <property type="taxonomic scope" value="Bacteria"/>
</dbReference>
<dbReference type="HOGENOM" id="CLU_016535_3_0_6"/>
<dbReference type="OrthoDB" id="9780552at2"/>
<dbReference type="Proteomes" id="UP000000684">
    <property type="component" value="Chromosome"/>
</dbReference>
<dbReference type="GO" id="GO:0005886">
    <property type="term" value="C:plasma membrane"/>
    <property type="evidence" value="ECO:0007669"/>
    <property type="project" value="UniProtKB-SubCell"/>
</dbReference>
<dbReference type="GO" id="GO:0032977">
    <property type="term" value="F:membrane insertase activity"/>
    <property type="evidence" value="ECO:0007669"/>
    <property type="project" value="InterPro"/>
</dbReference>
<dbReference type="GO" id="GO:0051205">
    <property type="term" value="P:protein insertion into membrane"/>
    <property type="evidence" value="ECO:0007669"/>
    <property type="project" value="TreeGrafter"/>
</dbReference>
<dbReference type="GO" id="GO:0015031">
    <property type="term" value="P:protein transport"/>
    <property type="evidence" value="ECO:0007669"/>
    <property type="project" value="UniProtKB-KW"/>
</dbReference>
<dbReference type="CDD" id="cd20070">
    <property type="entry name" value="5TM_YidC_Alb3"/>
    <property type="match status" value="1"/>
</dbReference>
<dbReference type="CDD" id="cd19961">
    <property type="entry name" value="EcYidC-like_peri"/>
    <property type="match status" value="1"/>
</dbReference>
<dbReference type="Gene3D" id="2.70.98.90">
    <property type="match status" value="1"/>
</dbReference>
<dbReference type="HAMAP" id="MF_01810">
    <property type="entry name" value="YidC_type1"/>
    <property type="match status" value="1"/>
</dbReference>
<dbReference type="InterPro" id="IPR019998">
    <property type="entry name" value="Membr_insert_YidC"/>
</dbReference>
<dbReference type="InterPro" id="IPR028053">
    <property type="entry name" value="Membr_insert_YidC_N"/>
</dbReference>
<dbReference type="InterPro" id="IPR001708">
    <property type="entry name" value="YidC/ALB3/OXA1/COX18"/>
</dbReference>
<dbReference type="InterPro" id="IPR028055">
    <property type="entry name" value="YidC/Oxa/ALB_C"/>
</dbReference>
<dbReference type="InterPro" id="IPR047196">
    <property type="entry name" value="YidC_ALB_C"/>
</dbReference>
<dbReference type="InterPro" id="IPR038221">
    <property type="entry name" value="YidC_periplasmic_sf"/>
</dbReference>
<dbReference type="NCBIfam" id="NF002351">
    <property type="entry name" value="PRK01318.1-1"/>
    <property type="match status" value="1"/>
</dbReference>
<dbReference type="NCBIfam" id="NF002352">
    <property type="entry name" value="PRK01318.1-3"/>
    <property type="match status" value="1"/>
</dbReference>
<dbReference type="NCBIfam" id="TIGR03593">
    <property type="entry name" value="yidC_nterm"/>
    <property type="match status" value="1"/>
</dbReference>
<dbReference type="NCBIfam" id="TIGR03592">
    <property type="entry name" value="yidC_oxa1_cterm"/>
    <property type="match status" value="1"/>
</dbReference>
<dbReference type="PANTHER" id="PTHR12428:SF65">
    <property type="entry name" value="CYTOCHROME C OXIDASE ASSEMBLY PROTEIN COX18, MITOCHONDRIAL"/>
    <property type="match status" value="1"/>
</dbReference>
<dbReference type="PANTHER" id="PTHR12428">
    <property type="entry name" value="OXA1"/>
    <property type="match status" value="1"/>
</dbReference>
<dbReference type="Pfam" id="PF02096">
    <property type="entry name" value="60KD_IMP"/>
    <property type="match status" value="1"/>
</dbReference>
<dbReference type="Pfam" id="PF14849">
    <property type="entry name" value="YidC_periplas"/>
    <property type="match status" value="1"/>
</dbReference>
<dbReference type="PRINTS" id="PR00701">
    <property type="entry name" value="60KDINNERMP"/>
</dbReference>
<dbReference type="PRINTS" id="PR01900">
    <property type="entry name" value="YIDCPROTEIN"/>
</dbReference>
<protein>
    <recommendedName>
        <fullName evidence="1">Membrane protein insertase YidC</fullName>
    </recommendedName>
    <alternativeName>
        <fullName evidence="1">Foldase YidC</fullName>
    </alternativeName>
    <alternativeName>
        <fullName evidence="1">Membrane integrase YidC</fullName>
    </alternativeName>
    <alternativeName>
        <fullName evidence="1">Membrane protein YidC</fullName>
    </alternativeName>
</protein>
<proteinExistence type="inferred from homology"/>